<protein>
    <recommendedName>
        <fullName evidence="1">Methionyl-tRNA formyltransferase</fullName>
        <ecNumber evidence="1">2.1.2.9</ecNumber>
    </recommendedName>
</protein>
<name>FMT_SALPK</name>
<proteinExistence type="inferred from homology"/>
<evidence type="ECO:0000255" key="1">
    <source>
        <dbReference type="HAMAP-Rule" id="MF_00182"/>
    </source>
</evidence>
<sequence>MSDSLRIIFAGTPDFAARHLDALLTSGHNVVGVFTQPDRPAGRGKKLMPSPVKVLAEEKGLPVFQPVSLRPQENQHLVADLHADVMVVVAYGLILPKAVLDMPRLGCINVHGSLLPRWRGAAPIQRSLWAGDAETGVTIMQMDVGLDTGDMLYKLACPITAEDTSGSLYNKLAELGPQGLITTLKQLADGTATPEAQNEALVTHAEKLSKEEARIDWSLSAAQLERCIRAFNPWPMSWLEIDGQPVKVWQASVIEDATQSLPGTILAATKQGIQVATGKGILNLLSLQPAGKKAMSAQDLLNSRREWFIPGNRLA</sequence>
<feature type="chain" id="PRO_1000098441" description="Methionyl-tRNA formyltransferase">
    <location>
        <begin position="1"/>
        <end position="315"/>
    </location>
</feature>
<feature type="binding site" evidence="1">
    <location>
        <begin position="113"/>
        <end position="116"/>
    </location>
    <ligand>
        <name>(6S)-5,6,7,8-tetrahydrofolate</name>
        <dbReference type="ChEBI" id="CHEBI:57453"/>
    </ligand>
</feature>
<comment type="function">
    <text evidence="1">Attaches a formyl group to the free amino group of methionyl-tRNA(fMet). The formyl group appears to play a dual role in the initiator identity of N-formylmethionyl-tRNA by promoting its recognition by IF2 and preventing the misappropriation of this tRNA by the elongation apparatus.</text>
</comment>
<comment type="catalytic activity">
    <reaction evidence="1">
        <text>L-methionyl-tRNA(fMet) + (6R)-10-formyltetrahydrofolate = N-formyl-L-methionyl-tRNA(fMet) + (6S)-5,6,7,8-tetrahydrofolate + H(+)</text>
        <dbReference type="Rhea" id="RHEA:24380"/>
        <dbReference type="Rhea" id="RHEA-COMP:9952"/>
        <dbReference type="Rhea" id="RHEA-COMP:9953"/>
        <dbReference type="ChEBI" id="CHEBI:15378"/>
        <dbReference type="ChEBI" id="CHEBI:57453"/>
        <dbReference type="ChEBI" id="CHEBI:78530"/>
        <dbReference type="ChEBI" id="CHEBI:78844"/>
        <dbReference type="ChEBI" id="CHEBI:195366"/>
        <dbReference type="EC" id="2.1.2.9"/>
    </reaction>
</comment>
<comment type="similarity">
    <text evidence="1">Belongs to the Fmt family.</text>
</comment>
<gene>
    <name evidence="1" type="primary">fmt</name>
    <name type="ordered locus">SSPA3053</name>
</gene>
<keyword id="KW-0648">Protein biosynthesis</keyword>
<keyword id="KW-0808">Transferase</keyword>
<reference key="1">
    <citation type="journal article" date="2009" name="BMC Genomics">
        <title>Pseudogene accumulation in the evolutionary histories of Salmonella enterica serovars Paratyphi A and Typhi.</title>
        <authorList>
            <person name="Holt K.E."/>
            <person name="Thomson N.R."/>
            <person name="Wain J."/>
            <person name="Langridge G.C."/>
            <person name="Hasan R."/>
            <person name="Bhutta Z.A."/>
            <person name="Quail M.A."/>
            <person name="Norbertczak H."/>
            <person name="Walker D."/>
            <person name="Simmonds M."/>
            <person name="White B."/>
            <person name="Bason N."/>
            <person name="Mungall K."/>
            <person name="Dougan G."/>
            <person name="Parkhill J."/>
        </authorList>
    </citation>
    <scope>NUCLEOTIDE SEQUENCE [LARGE SCALE GENOMIC DNA]</scope>
    <source>
        <strain>AKU_12601</strain>
    </source>
</reference>
<organism>
    <name type="scientific">Salmonella paratyphi A (strain AKU_12601)</name>
    <dbReference type="NCBI Taxonomy" id="554290"/>
    <lineage>
        <taxon>Bacteria</taxon>
        <taxon>Pseudomonadati</taxon>
        <taxon>Pseudomonadota</taxon>
        <taxon>Gammaproteobacteria</taxon>
        <taxon>Enterobacterales</taxon>
        <taxon>Enterobacteriaceae</taxon>
        <taxon>Salmonella</taxon>
    </lineage>
</organism>
<accession>B5BGV4</accession>
<dbReference type="EC" id="2.1.2.9" evidence="1"/>
<dbReference type="EMBL" id="FM200053">
    <property type="protein sequence ID" value="CAR61304.1"/>
    <property type="molecule type" value="Genomic_DNA"/>
</dbReference>
<dbReference type="RefSeq" id="WP_001285165.1">
    <property type="nucleotide sequence ID" value="NC_011147.1"/>
</dbReference>
<dbReference type="SMR" id="B5BGV4"/>
<dbReference type="KEGG" id="sek:SSPA3053"/>
<dbReference type="HOGENOM" id="CLU_033347_1_2_6"/>
<dbReference type="Proteomes" id="UP000001869">
    <property type="component" value="Chromosome"/>
</dbReference>
<dbReference type="GO" id="GO:0005829">
    <property type="term" value="C:cytosol"/>
    <property type="evidence" value="ECO:0007669"/>
    <property type="project" value="TreeGrafter"/>
</dbReference>
<dbReference type="GO" id="GO:0004479">
    <property type="term" value="F:methionyl-tRNA formyltransferase activity"/>
    <property type="evidence" value="ECO:0007669"/>
    <property type="project" value="UniProtKB-UniRule"/>
</dbReference>
<dbReference type="CDD" id="cd08646">
    <property type="entry name" value="FMT_core_Met-tRNA-FMT_N"/>
    <property type="match status" value="1"/>
</dbReference>
<dbReference type="CDD" id="cd08704">
    <property type="entry name" value="Met_tRNA_FMT_C"/>
    <property type="match status" value="1"/>
</dbReference>
<dbReference type="FunFam" id="3.10.25.10:FF:000001">
    <property type="entry name" value="Methionyl-tRNA formyltransferase"/>
    <property type="match status" value="1"/>
</dbReference>
<dbReference type="FunFam" id="3.40.50.170:FF:000003">
    <property type="entry name" value="Methionyl-tRNA formyltransferase"/>
    <property type="match status" value="1"/>
</dbReference>
<dbReference type="Gene3D" id="3.10.25.10">
    <property type="entry name" value="Formyl transferase, C-terminal domain"/>
    <property type="match status" value="1"/>
</dbReference>
<dbReference type="Gene3D" id="3.40.50.170">
    <property type="entry name" value="Formyl transferase, N-terminal domain"/>
    <property type="match status" value="1"/>
</dbReference>
<dbReference type="HAMAP" id="MF_00182">
    <property type="entry name" value="Formyl_trans"/>
    <property type="match status" value="1"/>
</dbReference>
<dbReference type="InterPro" id="IPR005794">
    <property type="entry name" value="Fmt"/>
</dbReference>
<dbReference type="InterPro" id="IPR005793">
    <property type="entry name" value="Formyl_trans_C"/>
</dbReference>
<dbReference type="InterPro" id="IPR037022">
    <property type="entry name" value="Formyl_trans_C_sf"/>
</dbReference>
<dbReference type="InterPro" id="IPR002376">
    <property type="entry name" value="Formyl_transf_N"/>
</dbReference>
<dbReference type="InterPro" id="IPR036477">
    <property type="entry name" value="Formyl_transf_N_sf"/>
</dbReference>
<dbReference type="InterPro" id="IPR011034">
    <property type="entry name" value="Formyl_transferase-like_C_sf"/>
</dbReference>
<dbReference type="InterPro" id="IPR001555">
    <property type="entry name" value="GART_AS"/>
</dbReference>
<dbReference type="InterPro" id="IPR044135">
    <property type="entry name" value="Met-tRNA-FMT_C"/>
</dbReference>
<dbReference type="InterPro" id="IPR041711">
    <property type="entry name" value="Met-tRNA-FMT_N"/>
</dbReference>
<dbReference type="NCBIfam" id="TIGR00460">
    <property type="entry name" value="fmt"/>
    <property type="match status" value="1"/>
</dbReference>
<dbReference type="PANTHER" id="PTHR11138">
    <property type="entry name" value="METHIONYL-TRNA FORMYLTRANSFERASE"/>
    <property type="match status" value="1"/>
</dbReference>
<dbReference type="PANTHER" id="PTHR11138:SF5">
    <property type="entry name" value="METHIONYL-TRNA FORMYLTRANSFERASE, MITOCHONDRIAL"/>
    <property type="match status" value="1"/>
</dbReference>
<dbReference type="Pfam" id="PF02911">
    <property type="entry name" value="Formyl_trans_C"/>
    <property type="match status" value="1"/>
</dbReference>
<dbReference type="Pfam" id="PF00551">
    <property type="entry name" value="Formyl_trans_N"/>
    <property type="match status" value="1"/>
</dbReference>
<dbReference type="SUPFAM" id="SSF50486">
    <property type="entry name" value="FMT C-terminal domain-like"/>
    <property type="match status" value="1"/>
</dbReference>
<dbReference type="SUPFAM" id="SSF53328">
    <property type="entry name" value="Formyltransferase"/>
    <property type="match status" value="1"/>
</dbReference>
<dbReference type="PROSITE" id="PS00373">
    <property type="entry name" value="GART"/>
    <property type="match status" value="1"/>
</dbReference>